<dbReference type="EC" id="2.1.3.2" evidence="1"/>
<dbReference type="EMBL" id="CP001364">
    <property type="protein sequence ID" value="ACM53446.1"/>
    <property type="molecule type" value="Genomic_DNA"/>
</dbReference>
<dbReference type="SMR" id="B9LFU5"/>
<dbReference type="KEGG" id="chl:Chy400_2043"/>
<dbReference type="HOGENOM" id="CLU_043846_2_0_0"/>
<dbReference type="OrthoDB" id="9774690at2"/>
<dbReference type="UniPathway" id="UPA00070">
    <property type="reaction ID" value="UER00116"/>
</dbReference>
<dbReference type="GO" id="GO:0005829">
    <property type="term" value="C:cytosol"/>
    <property type="evidence" value="ECO:0007669"/>
    <property type="project" value="TreeGrafter"/>
</dbReference>
<dbReference type="GO" id="GO:0016597">
    <property type="term" value="F:amino acid binding"/>
    <property type="evidence" value="ECO:0007669"/>
    <property type="project" value="InterPro"/>
</dbReference>
<dbReference type="GO" id="GO:0004070">
    <property type="term" value="F:aspartate carbamoyltransferase activity"/>
    <property type="evidence" value="ECO:0007669"/>
    <property type="project" value="UniProtKB-UniRule"/>
</dbReference>
<dbReference type="GO" id="GO:0006207">
    <property type="term" value="P:'de novo' pyrimidine nucleobase biosynthetic process"/>
    <property type="evidence" value="ECO:0007669"/>
    <property type="project" value="InterPro"/>
</dbReference>
<dbReference type="GO" id="GO:0044205">
    <property type="term" value="P:'de novo' UMP biosynthetic process"/>
    <property type="evidence" value="ECO:0007669"/>
    <property type="project" value="UniProtKB-UniRule"/>
</dbReference>
<dbReference type="GO" id="GO:0006520">
    <property type="term" value="P:amino acid metabolic process"/>
    <property type="evidence" value="ECO:0007669"/>
    <property type="project" value="InterPro"/>
</dbReference>
<dbReference type="FunFam" id="3.40.50.1370:FF:000007">
    <property type="entry name" value="Aspartate carbamoyltransferase"/>
    <property type="match status" value="1"/>
</dbReference>
<dbReference type="Gene3D" id="3.40.50.1370">
    <property type="entry name" value="Aspartate/ornithine carbamoyltransferase"/>
    <property type="match status" value="2"/>
</dbReference>
<dbReference type="HAMAP" id="MF_00001">
    <property type="entry name" value="Asp_carb_tr"/>
    <property type="match status" value="1"/>
</dbReference>
<dbReference type="InterPro" id="IPR006132">
    <property type="entry name" value="Asp/Orn_carbamoyltranf_P-bd"/>
</dbReference>
<dbReference type="InterPro" id="IPR006130">
    <property type="entry name" value="Asp/Orn_carbamoylTrfase"/>
</dbReference>
<dbReference type="InterPro" id="IPR036901">
    <property type="entry name" value="Asp/Orn_carbamoylTrfase_sf"/>
</dbReference>
<dbReference type="InterPro" id="IPR002082">
    <property type="entry name" value="Asp_carbamoyltransf"/>
</dbReference>
<dbReference type="InterPro" id="IPR006131">
    <property type="entry name" value="Asp_carbamoyltransf_Asp/Orn-bd"/>
</dbReference>
<dbReference type="NCBIfam" id="TIGR00670">
    <property type="entry name" value="asp_carb_tr"/>
    <property type="match status" value="1"/>
</dbReference>
<dbReference type="NCBIfam" id="NF002032">
    <property type="entry name" value="PRK00856.1"/>
    <property type="match status" value="1"/>
</dbReference>
<dbReference type="PANTHER" id="PTHR45753:SF6">
    <property type="entry name" value="ASPARTATE CARBAMOYLTRANSFERASE"/>
    <property type="match status" value="1"/>
</dbReference>
<dbReference type="PANTHER" id="PTHR45753">
    <property type="entry name" value="ORNITHINE CARBAMOYLTRANSFERASE, MITOCHONDRIAL"/>
    <property type="match status" value="1"/>
</dbReference>
<dbReference type="Pfam" id="PF00185">
    <property type="entry name" value="OTCace"/>
    <property type="match status" value="1"/>
</dbReference>
<dbReference type="Pfam" id="PF02729">
    <property type="entry name" value="OTCace_N"/>
    <property type="match status" value="1"/>
</dbReference>
<dbReference type="PRINTS" id="PR00100">
    <property type="entry name" value="AOTCASE"/>
</dbReference>
<dbReference type="PRINTS" id="PR00101">
    <property type="entry name" value="ATCASE"/>
</dbReference>
<dbReference type="SUPFAM" id="SSF53671">
    <property type="entry name" value="Aspartate/ornithine carbamoyltransferase"/>
    <property type="match status" value="1"/>
</dbReference>
<dbReference type="PROSITE" id="PS00097">
    <property type="entry name" value="CARBAMOYLTRANSFERASE"/>
    <property type="match status" value="1"/>
</dbReference>
<evidence type="ECO:0000255" key="1">
    <source>
        <dbReference type="HAMAP-Rule" id="MF_00001"/>
    </source>
</evidence>
<comment type="function">
    <text evidence="1">Catalyzes the condensation of carbamoyl phosphate and aspartate to form carbamoyl aspartate and inorganic phosphate, the committed step in the de novo pyrimidine nucleotide biosynthesis pathway.</text>
</comment>
<comment type="catalytic activity">
    <reaction evidence="1">
        <text>carbamoyl phosphate + L-aspartate = N-carbamoyl-L-aspartate + phosphate + H(+)</text>
        <dbReference type="Rhea" id="RHEA:20013"/>
        <dbReference type="ChEBI" id="CHEBI:15378"/>
        <dbReference type="ChEBI" id="CHEBI:29991"/>
        <dbReference type="ChEBI" id="CHEBI:32814"/>
        <dbReference type="ChEBI" id="CHEBI:43474"/>
        <dbReference type="ChEBI" id="CHEBI:58228"/>
        <dbReference type="EC" id="2.1.3.2"/>
    </reaction>
</comment>
<comment type="pathway">
    <text evidence="1">Pyrimidine metabolism; UMP biosynthesis via de novo pathway; (S)-dihydroorotate from bicarbonate: step 2/3.</text>
</comment>
<comment type="subunit">
    <text evidence="1">Heterododecamer (2C3:3R2) of six catalytic PyrB chains organized as two trimers (C3), and six regulatory PyrI chains organized as three dimers (R2).</text>
</comment>
<comment type="similarity">
    <text evidence="1">Belongs to the aspartate/ornithine carbamoyltransferase superfamily. ATCase family.</text>
</comment>
<proteinExistence type="inferred from homology"/>
<protein>
    <recommendedName>
        <fullName evidence="1">Aspartate carbamoyltransferase catalytic subunit</fullName>
        <ecNumber evidence="1">2.1.3.2</ecNumber>
    </recommendedName>
    <alternativeName>
        <fullName evidence="1">Aspartate transcarbamylase</fullName>
        <shortName evidence="1">ATCase</shortName>
    </alternativeName>
</protein>
<reference key="1">
    <citation type="submission" date="2009-01" db="EMBL/GenBank/DDBJ databases">
        <title>Complete sequence of Chloroflexus sp. Y-400-fl.</title>
        <authorList>
            <consortium name="US DOE Joint Genome Institute"/>
            <person name="Lucas S."/>
            <person name="Copeland A."/>
            <person name="Lapidus A."/>
            <person name="Glavina del Rio T."/>
            <person name="Dalin E."/>
            <person name="Tice H."/>
            <person name="Bruce D."/>
            <person name="Goodwin L."/>
            <person name="Pitluck S."/>
            <person name="Sims D."/>
            <person name="Kiss H."/>
            <person name="Brettin T."/>
            <person name="Detter J.C."/>
            <person name="Han C."/>
            <person name="Larimer F."/>
            <person name="Land M."/>
            <person name="Hauser L."/>
            <person name="Kyrpides N."/>
            <person name="Ovchinnikova G."/>
            <person name="Bryant D.A."/>
            <person name="Richardson P."/>
        </authorList>
    </citation>
    <scope>NUCLEOTIDE SEQUENCE [LARGE SCALE GENOMIC DNA]</scope>
    <source>
        <strain>ATCC 29364 / DSM 637 / Y-400-fl</strain>
    </source>
</reference>
<sequence>MTELRRHAIDLDNFSATEIEEILETAESMREVLSREIKQVPALRGKTVVNMFFEESTRTRISFELAARALSANVVAFTARGSSVEKGESLVDTVRTLQALGADIIVMRHSQSGAPYLVARHFRGSLINAGDGRHAHPTQALLDLYTMQSRLGQIRDLHVVIVGDILHSRVVRSNLWGLTRLGARVTLCGPPTLIGPAAFWTATWPQVRIAYELDPLLPEADVVMALRLQKERMQSGLLPALREYTRIYGLTSERLARLPSHAIVMHPGPMNEGIEIFPEVATASPAVIEEQVTNGVAVRMALLYRMAG</sequence>
<name>PYRB_CHLSY</name>
<organism>
    <name type="scientific">Chloroflexus aurantiacus (strain ATCC 29364 / DSM 637 / Y-400-fl)</name>
    <dbReference type="NCBI Taxonomy" id="480224"/>
    <lineage>
        <taxon>Bacteria</taxon>
        <taxon>Bacillati</taxon>
        <taxon>Chloroflexota</taxon>
        <taxon>Chloroflexia</taxon>
        <taxon>Chloroflexales</taxon>
        <taxon>Chloroflexineae</taxon>
        <taxon>Chloroflexaceae</taxon>
        <taxon>Chloroflexus</taxon>
    </lineage>
</organism>
<feature type="chain" id="PRO_1000116132" description="Aspartate carbamoyltransferase catalytic subunit">
    <location>
        <begin position="1"/>
        <end position="308"/>
    </location>
</feature>
<feature type="binding site" evidence="1">
    <location>
        <position position="58"/>
    </location>
    <ligand>
        <name>carbamoyl phosphate</name>
        <dbReference type="ChEBI" id="CHEBI:58228"/>
    </ligand>
</feature>
<feature type="binding site" evidence="1">
    <location>
        <position position="59"/>
    </location>
    <ligand>
        <name>carbamoyl phosphate</name>
        <dbReference type="ChEBI" id="CHEBI:58228"/>
    </ligand>
</feature>
<feature type="binding site" evidence="1">
    <location>
        <position position="86"/>
    </location>
    <ligand>
        <name>L-aspartate</name>
        <dbReference type="ChEBI" id="CHEBI:29991"/>
    </ligand>
</feature>
<feature type="binding site" evidence="1">
    <location>
        <position position="108"/>
    </location>
    <ligand>
        <name>carbamoyl phosphate</name>
        <dbReference type="ChEBI" id="CHEBI:58228"/>
    </ligand>
</feature>
<feature type="binding site" evidence="1">
    <location>
        <position position="136"/>
    </location>
    <ligand>
        <name>carbamoyl phosphate</name>
        <dbReference type="ChEBI" id="CHEBI:58228"/>
    </ligand>
</feature>
<feature type="binding site" evidence="1">
    <location>
        <position position="139"/>
    </location>
    <ligand>
        <name>carbamoyl phosphate</name>
        <dbReference type="ChEBI" id="CHEBI:58228"/>
    </ligand>
</feature>
<feature type="binding site" evidence="1">
    <location>
        <position position="169"/>
    </location>
    <ligand>
        <name>L-aspartate</name>
        <dbReference type="ChEBI" id="CHEBI:29991"/>
    </ligand>
</feature>
<feature type="binding site" evidence="1">
    <location>
        <position position="227"/>
    </location>
    <ligand>
        <name>L-aspartate</name>
        <dbReference type="ChEBI" id="CHEBI:29991"/>
    </ligand>
</feature>
<feature type="binding site" evidence="1">
    <location>
        <position position="268"/>
    </location>
    <ligand>
        <name>carbamoyl phosphate</name>
        <dbReference type="ChEBI" id="CHEBI:58228"/>
    </ligand>
</feature>
<feature type="binding site" evidence="1">
    <location>
        <position position="269"/>
    </location>
    <ligand>
        <name>carbamoyl phosphate</name>
        <dbReference type="ChEBI" id="CHEBI:58228"/>
    </ligand>
</feature>
<accession>B9LFU5</accession>
<gene>
    <name evidence="1" type="primary">pyrB</name>
    <name type="ordered locus">Chy400_2043</name>
</gene>
<keyword id="KW-0665">Pyrimidine biosynthesis</keyword>
<keyword id="KW-0808">Transferase</keyword>